<sequence>MANSAQARKRARQAAKANSHNSALRSKYRTAVKAVRKAIEAGDAAQAAEIFKASAKTLDIIADKKIVHKNKAARHKSRLAAAVKGLQAPAAQ</sequence>
<name>RS20_PARP8</name>
<feature type="chain" id="PRO_1000126413" description="Small ribosomal subunit protein bS20">
    <location>
        <begin position="1"/>
        <end position="92"/>
    </location>
</feature>
<feature type="region of interest" description="Disordered" evidence="2">
    <location>
        <begin position="1"/>
        <end position="25"/>
    </location>
</feature>
<organism>
    <name type="scientific">Paraburkholderia phymatum (strain DSM 17167 / CIP 108236 / LMG 21445 / STM815)</name>
    <name type="common">Burkholderia phymatum</name>
    <dbReference type="NCBI Taxonomy" id="391038"/>
    <lineage>
        <taxon>Bacteria</taxon>
        <taxon>Pseudomonadati</taxon>
        <taxon>Pseudomonadota</taxon>
        <taxon>Betaproteobacteria</taxon>
        <taxon>Burkholderiales</taxon>
        <taxon>Burkholderiaceae</taxon>
        <taxon>Paraburkholderia</taxon>
    </lineage>
</organism>
<gene>
    <name evidence="1" type="primary">rpsT</name>
    <name type="ordered locus">Bphy_0531</name>
</gene>
<evidence type="ECO:0000255" key="1">
    <source>
        <dbReference type="HAMAP-Rule" id="MF_00500"/>
    </source>
</evidence>
<evidence type="ECO:0000256" key="2">
    <source>
        <dbReference type="SAM" id="MobiDB-lite"/>
    </source>
</evidence>
<evidence type="ECO:0000305" key="3"/>
<dbReference type="EMBL" id="CP001043">
    <property type="protein sequence ID" value="ACC69723.1"/>
    <property type="molecule type" value="Genomic_DNA"/>
</dbReference>
<dbReference type="RefSeq" id="WP_012399948.1">
    <property type="nucleotide sequence ID" value="NZ_CADFGH010000001.1"/>
</dbReference>
<dbReference type="SMR" id="B2JDU7"/>
<dbReference type="STRING" id="391038.Bphy_0531"/>
<dbReference type="KEGG" id="bph:Bphy_0531"/>
<dbReference type="eggNOG" id="COG0268">
    <property type="taxonomic scope" value="Bacteria"/>
</dbReference>
<dbReference type="HOGENOM" id="CLU_160655_4_0_4"/>
<dbReference type="OrthoDB" id="9807974at2"/>
<dbReference type="Proteomes" id="UP000001192">
    <property type="component" value="Chromosome 1"/>
</dbReference>
<dbReference type="GO" id="GO:0005829">
    <property type="term" value="C:cytosol"/>
    <property type="evidence" value="ECO:0007669"/>
    <property type="project" value="TreeGrafter"/>
</dbReference>
<dbReference type="GO" id="GO:0015935">
    <property type="term" value="C:small ribosomal subunit"/>
    <property type="evidence" value="ECO:0007669"/>
    <property type="project" value="TreeGrafter"/>
</dbReference>
<dbReference type="GO" id="GO:0070181">
    <property type="term" value="F:small ribosomal subunit rRNA binding"/>
    <property type="evidence" value="ECO:0007669"/>
    <property type="project" value="TreeGrafter"/>
</dbReference>
<dbReference type="GO" id="GO:0003735">
    <property type="term" value="F:structural constituent of ribosome"/>
    <property type="evidence" value="ECO:0007669"/>
    <property type="project" value="InterPro"/>
</dbReference>
<dbReference type="GO" id="GO:0006412">
    <property type="term" value="P:translation"/>
    <property type="evidence" value="ECO:0007669"/>
    <property type="project" value="UniProtKB-UniRule"/>
</dbReference>
<dbReference type="FunFam" id="1.20.58.110:FF:000001">
    <property type="entry name" value="30S ribosomal protein S20"/>
    <property type="match status" value="1"/>
</dbReference>
<dbReference type="Gene3D" id="1.20.58.110">
    <property type="entry name" value="Ribosomal protein S20"/>
    <property type="match status" value="1"/>
</dbReference>
<dbReference type="HAMAP" id="MF_00500">
    <property type="entry name" value="Ribosomal_bS20"/>
    <property type="match status" value="1"/>
</dbReference>
<dbReference type="InterPro" id="IPR002583">
    <property type="entry name" value="Ribosomal_bS20"/>
</dbReference>
<dbReference type="InterPro" id="IPR036510">
    <property type="entry name" value="Ribosomal_bS20_sf"/>
</dbReference>
<dbReference type="NCBIfam" id="TIGR00029">
    <property type="entry name" value="S20"/>
    <property type="match status" value="1"/>
</dbReference>
<dbReference type="PANTHER" id="PTHR33398">
    <property type="entry name" value="30S RIBOSOMAL PROTEIN S20"/>
    <property type="match status" value="1"/>
</dbReference>
<dbReference type="PANTHER" id="PTHR33398:SF1">
    <property type="entry name" value="SMALL RIBOSOMAL SUBUNIT PROTEIN BS20C"/>
    <property type="match status" value="1"/>
</dbReference>
<dbReference type="Pfam" id="PF01649">
    <property type="entry name" value="Ribosomal_S20p"/>
    <property type="match status" value="1"/>
</dbReference>
<dbReference type="SUPFAM" id="SSF46992">
    <property type="entry name" value="Ribosomal protein S20"/>
    <property type="match status" value="1"/>
</dbReference>
<keyword id="KW-1185">Reference proteome</keyword>
<keyword id="KW-0687">Ribonucleoprotein</keyword>
<keyword id="KW-0689">Ribosomal protein</keyword>
<keyword id="KW-0694">RNA-binding</keyword>
<keyword id="KW-0699">rRNA-binding</keyword>
<reference key="1">
    <citation type="journal article" date="2014" name="Stand. Genomic Sci.">
        <title>Complete genome sequence of Burkholderia phymatum STM815(T), a broad host range and efficient nitrogen-fixing symbiont of Mimosa species.</title>
        <authorList>
            <person name="Moulin L."/>
            <person name="Klonowska A."/>
            <person name="Caroline B."/>
            <person name="Booth K."/>
            <person name="Vriezen J.A."/>
            <person name="Melkonian R."/>
            <person name="James E.K."/>
            <person name="Young J.P."/>
            <person name="Bena G."/>
            <person name="Hauser L."/>
            <person name="Land M."/>
            <person name="Kyrpides N."/>
            <person name="Bruce D."/>
            <person name="Chain P."/>
            <person name="Copeland A."/>
            <person name="Pitluck S."/>
            <person name="Woyke T."/>
            <person name="Lizotte-Waniewski M."/>
            <person name="Bristow J."/>
            <person name="Riley M."/>
        </authorList>
    </citation>
    <scope>NUCLEOTIDE SEQUENCE [LARGE SCALE GENOMIC DNA]</scope>
    <source>
        <strain>DSM 17167 / CIP 108236 / LMG 21445 / STM815</strain>
    </source>
</reference>
<comment type="function">
    <text evidence="1">Binds directly to 16S ribosomal RNA.</text>
</comment>
<comment type="similarity">
    <text evidence="1">Belongs to the bacterial ribosomal protein bS20 family.</text>
</comment>
<protein>
    <recommendedName>
        <fullName evidence="1">Small ribosomal subunit protein bS20</fullName>
    </recommendedName>
    <alternativeName>
        <fullName evidence="3">30S ribosomal protein S20</fullName>
    </alternativeName>
</protein>
<proteinExistence type="inferred from homology"/>
<accession>B2JDU7</accession>